<gene>
    <name evidence="11" type="primary">CUE5</name>
    <name type="ordered locus">YOR042W</name>
</gene>
<reference evidence="10" key="1">
    <citation type="journal article" date="1997" name="Nature">
        <title>The nucleotide sequence of Saccharomyces cerevisiae chromosome XV.</title>
        <authorList>
            <person name="Dujon B."/>
            <person name="Albermann K."/>
            <person name="Aldea M."/>
            <person name="Alexandraki D."/>
            <person name="Ansorge W."/>
            <person name="Arino J."/>
            <person name="Benes V."/>
            <person name="Bohn C."/>
            <person name="Bolotin-Fukuhara M."/>
            <person name="Bordonne R."/>
            <person name="Boyer J."/>
            <person name="Camasses A."/>
            <person name="Casamayor A."/>
            <person name="Casas C."/>
            <person name="Cheret G."/>
            <person name="Cziepluch C."/>
            <person name="Daignan-Fornier B."/>
            <person name="Dang V.-D."/>
            <person name="de Haan M."/>
            <person name="Delius H."/>
            <person name="Durand P."/>
            <person name="Fairhead C."/>
            <person name="Feldmann H."/>
            <person name="Gaillon L."/>
            <person name="Galisson F."/>
            <person name="Gamo F.-J."/>
            <person name="Gancedo C."/>
            <person name="Goffeau A."/>
            <person name="Goulding S.E."/>
            <person name="Grivell L.A."/>
            <person name="Habbig B."/>
            <person name="Hand N.J."/>
            <person name="Hani J."/>
            <person name="Hattenhorst U."/>
            <person name="Hebling U."/>
            <person name="Hernando Y."/>
            <person name="Herrero E."/>
            <person name="Heumann K."/>
            <person name="Hiesel R."/>
            <person name="Hilger F."/>
            <person name="Hofmann B."/>
            <person name="Hollenberg C.P."/>
            <person name="Hughes B."/>
            <person name="Jauniaux J.-C."/>
            <person name="Kalogeropoulos A."/>
            <person name="Katsoulou C."/>
            <person name="Kordes E."/>
            <person name="Lafuente M.J."/>
            <person name="Landt O."/>
            <person name="Louis E.J."/>
            <person name="Maarse A.C."/>
            <person name="Madania A."/>
            <person name="Mannhaupt G."/>
            <person name="Marck C."/>
            <person name="Martin R.P."/>
            <person name="Mewes H.-W."/>
            <person name="Michaux G."/>
            <person name="Paces V."/>
            <person name="Parle-McDermott A.G."/>
            <person name="Pearson B.M."/>
            <person name="Perrin A."/>
            <person name="Pettersson B."/>
            <person name="Poch O."/>
            <person name="Pohl T.M."/>
            <person name="Poirey R."/>
            <person name="Portetelle D."/>
            <person name="Pujol A."/>
            <person name="Purnelle B."/>
            <person name="Ramezani Rad M."/>
            <person name="Rechmann S."/>
            <person name="Schwager C."/>
            <person name="Schweizer M."/>
            <person name="Sor F."/>
            <person name="Sterky F."/>
            <person name="Tarassov I.A."/>
            <person name="Teodoru C."/>
            <person name="Tettelin H."/>
            <person name="Thierry A."/>
            <person name="Tobiasch E."/>
            <person name="Tzermia M."/>
            <person name="Uhlen M."/>
            <person name="Unseld M."/>
            <person name="Valens M."/>
            <person name="Vandenbol M."/>
            <person name="Vetter I."/>
            <person name="Vlcek C."/>
            <person name="Voet M."/>
            <person name="Volckaert G."/>
            <person name="Voss H."/>
            <person name="Wambutt R."/>
            <person name="Wedler H."/>
            <person name="Wiemann S."/>
            <person name="Winsor B."/>
            <person name="Wolfe K.H."/>
            <person name="Zollner A."/>
            <person name="Zumstein E."/>
            <person name="Kleine K."/>
        </authorList>
    </citation>
    <scope>NUCLEOTIDE SEQUENCE [LARGE SCALE GENOMIC DNA]</scope>
    <source>
        <strain>ATCC 204508 / S288c</strain>
    </source>
</reference>
<reference key="2">
    <citation type="journal article" date="2014" name="G3 (Bethesda)">
        <title>The reference genome sequence of Saccharomyces cerevisiae: Then and now.</title>
        <authorList>
            <person name="Engel S.R."/>
            <person name="Dietrich F.S."/>
            <person name="Fisk D.G."/>
            <person name="Binkley G."/>
            <person name="Balakrishnan R."/>
            <person name="Costanzo M.C."/>
            <person name="Dwight S.S."/>
            <person name="Hitz B.C."/>
            <person name="Karra K."/>
            <person name="Nash R.S."/>
            <person name="Weng S."/>
            <person name="Wong E.D."/>
            <person name="Lloyd P."/>
            <person name="Skrzypek M.S."/>
            <person name="Miyasato S.R."/>
            <person name="Simison M."/>
            <person name="Cherry J.M."/>
        </authorList>
    </citation>
    <scope>GENOME REANNOTATION</scope>
    <source>
        <strain>ATCC 204508 / S288c</strain>
    </source>
</reference>
<reference key="3">
    <citation type="journal article" date="2007" name="Genome Res.">
        <title>Approaching a complete repository of sequence-verified protein-encoding clones for Saccharomyces cerevisiae.</title>
        <authorList>
            <person name="Hu Y."/>
            <person name="Rolfs A."/>
            <person name="Bhullar B."/>
            <person name="Murthy T.V.S."/>
            <person name="Zhu C."/>
            <person name="Berger M.F."/>
            <person name="Camargo A.A."/>
            <person name="Kelley F."/>
            <person name="McCarron S."/>
            <person name="Jepson D."/>
            <person name="Richardson A."/>
            <person name="Raphael J."/>
            <person name="Moreira D."/>
            <person name="Taycher E."/>
            <person name="Zuo D."/>
            <person name="Mohr S."/>
            <person name="Kane M.F."/>
            <person name="Williamson J."/>
            <person name="Simpson A.J.G."/>
            <person name="Bulyk M.L."/>
            <person name="Harlow E."/>
            <person name="Marsischky G."/>
            <person name="Kolodner R.D."/>
            <person name="LaBaer J."/>
        </authorList>
    </citation>
    <scope>NUCLEOTIDE SEQUENCE [GENOMIC DNA]</scope>
    <source>
        <strain>ATCC 204508 / S288c</strain>
    </source>
</reference>
<reference evidence="9" key="4">
    <citation type="journal article" date="2003" name="EMBO J.">
        <title>A ubiquitin-binding motif required for intramolecular monoubiquitylation, the CUE domain.</title>
        <authorList>
            <person name="Shih S.C."/>
            <person name="Prag G."/>
            <person name="Francis S.A."/>
            <person name="Sutanto M.A."/>
            <person name="Hurley J.H."/>
            <person name="Hicke L."/>
        </authorList>
    </citation>
    <scope>FUNCTION</scope>
    <scope>UBIQUITIN-BINDING</scope>
</reference>
<reference evidence="9" key="5">
    <citation type="journal article" date="2003" name="Nature">
        <title>Global analysis of protein localization in budding yeast.</title>
        <authorList>
            <person name="Huh W.-K."/>
            <person name="Falvo J.V."/>
            <person name="Gerke L.C."/>
            <person name="Carroll A.S."/>
            <person name="Howson R.W."/>
            <person name="Weissman J.S."/>
            <person name="O'Shea E.K."/>
        </authorList>
    </citation>
    <scope>SUBCELLULAR LOCATION [LARGE SCALE ANALYSIS]</scope>
</reference>
<reference evidence="9" key="6">
    <citation type="journal article" date="2003" name="Nature">
        <title>Global analysis of protein expression in yeast.</title>
        <authorList>
            <person name="Ghaemmaghami S."/>
            <person name="Huh W.-K."/>
            <person name="Bower K."/>
            <person name="Howson R.W."/>
            <person name="Belle A."/>
            <person name="Dephoure N."/>
            <person name="O'Shea E.K."/>
            <person name="Weissman J.S."/>
        </authorList>
    </citation>
    <scope>LEVEL OF PROTEIN EXPRESSION [LARGE SCALE ANALYSIS]</scope>
</reference>
<reference key="7">
    <citation type="journal article" date="2003" name="Nat. Biotechnol.">
        <title>A proteomics approach to understanding protein ubiquitination.</title>
        <authorList>
            <person name="Peng J."/>
            <person name="Schwartz D."/>
            <person name="Elias J.E."/>
            <person name="Thoreen C.C."/>
            <person name="Cheng D."/>
            <person name="Marsischky G."/>
            <person name="Roelofs J."/>
            <person name="Finley D."/>
            <person name="Gygi S.P."/>
        </authorList>
    </citation>
    <scope>UBIQUITINATION [LARGE SCALE ANALYSIS] AT LYS-76 AND LYS-396</scope>
    <scope>IDENTIFICATION BY MASS SPECTROMETRY</scope>
    <source>
        <strain>SUB592</strain>
    </source>
</reference>
<reference evidence="9" key="8">
    <citation type="journal article" date="2004" name="Mol. Cell">
        <title>Targeted proteomic study of the cyclin-Cdk module.</title>
        <authorList>
            <person name="Archambault V."/>
            <person name="Chang E.J."/>
            <person name="Drapkin B.J."/>
            <person name="Cross F.R."/>
            <person name="Chait B.T."/>
            <person name="Rout M.P."/>
        </authorList>
    </citation>
    <scope>IDENTIFICATION BY MASS SPECTROMETRY</scope>
    <scope>INTERACTION WITH CLB2</scope>
</reference>
<reference key="9">
    <citation type="journal article" date="2007" name="J. Proteome Res.">
        <title>Large-scale phosphorylation analysis of alpha-factor-arrested Saccharomyces cerevisiae.</title>
        <authorList>
            <person name="Li X."/>
            <person name="Gerber S.A."/>
            <person name="Rudner A.D."/>
            <person name="Beausoleil S.A."/>
            <person name="Haas W."/>
            <person name="Villen J."/>
            <person name="Elias J.E."/>
            <person name="Gygi S.P."/>
        </authorList>
    </citation>
    <scope>PHOSPHORYLATION [LARGE SCALE ANALYSIS] AT SER-21; THR-70; THR-167; SER-220; SER-348; THR-364 AND SER-407</scope>
    <scope>IDENTIFICATION BY MASS SPECTROMETRY [LARGE SCALE ANALYSIS]</scope>
    <source>
        <strain>ADR376</strain>
    </source>
</reference>
<reference key="10">
    <citation type="journal article" date="2007" name="Proc. Natl. Acad. Sci. U.S.A.">
        <title>Analysis of phosphorylation sites on proteins from Saccharomyces cerevisiae by electron transfer dissociation (ETD) mass spectrometry.</title>
        <authorList>
            <person name="Chi A."/>
            <person name="Huttenhower C."/>
            <person name="Geer L.Y."/>
            <person name="Coon J.J."/>
            <person name="Syka J.E.P."/>
            <person name="Bai D.L."/>
            <person name="Shabanowitz J."/>
            <person name="Burke D.J."/>
            <person name="Troyanskaya O.G."/>
            <person name="Hunt D.F."/>
        </authorList>
    </citation>
    <scope>PHOSPHORYLATION [LARGE SCALE ANALYSIS] AT SER-91</scope>
    <scope>IDENTIFICATION BY MASS SPECTROMETRY [LARGE SCALE ANALYSIS]</scope>
</reference>
<reference key="11">
    <citation type="journal article" date="2008" name="Mol. Cell. Proteomics">
        <title>A multidimensional chromatography technology for in-depth phosphoproteome analysis.</title>
        <authorList>
            <person name="Albuquerque C.P."/>
            <person name="Smolka M.B."/>
            <person name="Payne S.H."/>
            <person name="Bafna V."/>
            <person name="Eng J."/>
            <person name="Zhou H."/>
        </authorList>
    </citation>
    <scope>PHOSPHORYLATION [LARGE SCALE ANALYSIS] AT SER-21; SER-36; THR-70; THR-167; SER-220; SER-309; THR-364 AND SER-407</scope>
    <scope>IDENTIFICATION BY MASS SPECTROMETRY [LARGE SCALE ANALYSIS]</scope>
</reference>
<reference key="12">
    <citation type="journal article" date="2009" name="Science">
        <title>Global analysis of Cdk1 substrate phosphorylation sites provides insights into evolution.</title>
        <authorList>
            <person name="Holt L.J."/>
            <person name="Tuch B.B."/>
            <person name="Villen J."/>
            <person name="Johnson A.D."/>
            <person name="Gygi S.P."/>
            <person name="Morgan D.O."/>
        </authorList>
    </citation>
    <scope>PHOSPHORYLATION [LARGE SCALE ANALYSIS] AT SER-21; THR-70; THR-167; SER-220; SER-309; SER-318; THR-346; THR-352; THR-364; THR-367 AND SER-407</scope>
    <scope>IDENTIFICATION BY MASS SPECTROMETRY [LARGE SCALE ANALYSIS]</scope>
</reference>
<reference key="13">
    <citation type="journal article" date="2012" name="Proteomics">
        <title>Sites of ubiquitin attachment in Saccharomyces cerevisiae.</title>
        <authorList>
            <person name="Starita L.M."/>
            <person name="Lo R.S."/>
            <person name="Eng J.K."/>
            <person name="von Haller P.D."/>
            <person name="Fields S."/>
        </authorList>
    </citation>
    <scope>UBIQUITINATION [LARGE SCALE ANALYSIS] AT LYS-15; LYS-59; LYS-76; LYS-156 AND LYS-354</scope>
    <scope>IDENTIFICATION BY MASS SPECTROMETRY [LARGE SCALE ANALYSIS]</scope>
</reference>
<reference key="14">
    <citation type="journal article" date="2014" name="Cell">
        <title>Autophagic clearance of PolyQ proteins mediated by ubiquitin-Atg8 adaptors of the conserved CUET protein family.</title>
        <authorList>
            <person name="Lu K."/>
            <person name="Psakhye I."/>
            <person name="Jentsch S."/>
        </authorList>
    </citation>
    <scope>INTERACTION WITH ATG8 AND UBIQUITIN</scope>
    <scope>DOMAIN</scope>
    <scope>MUTAGENESIS OF PHE-109; PRO-110; LEU-135; LEU-136; TRP-373 AND LEU-376</scope>
    <scope>FUNCTION</scope>
</reference>
<sequence>MEEKEGIKDSSLLEKSNVPESINEDISKTTDVDLNSDGKKDNDTSAKDGTPKVEEKVNKSSGIDEDEVVTPAEDAKEEEEEHPPLPARRKSEEEPSKENPILQELKDAFPNLEEKYIKAVIIASQGVLSPAFNALLFLSDPESGKDIELPTQPVRKNPEAPARRRQTQLEQDELLARQLDEQFNSSHSRRRNRDRATRSMHEQRRRRHNPNEREQHHEDSEEEDSWSQFVEKDLPELTDRAGRSLQDTANKVSNWISDAYRRNFASGNEQNDNQHGHQDQQEWEPEIVDLSQGGKNSRPQQPERRRFNSFGVQVGDDSLESHGITLHNEDGFEDDEDVPPQLPTRTKSGESTGKVVAETTYIDTPDTETKKKWQPLPPEPLDTTPTKVNAVSRNKKNPDEDEFLINSDDEM</sequence>
<dbReference type="EMBL" id="Z74949">
    <property type="protein sequence ID" value="CAA99232.1"/>
    <property type="molecule type" value="Genomic_DNA"/>
</dbReference>
<dbReference type="EMBL" id="AY558044">
    <property type="protein sequence ID" value="AAS56370.1"/>
    <property type="molecule type" value="Genomic_DNA"/>
</dbReference>
<dbReference type="EMBL" id="BK006948">
    <property type="protein sequence ID" value="DAA10824.1"/>
    <property type="molecule type" value="Genomic_DNA"/>
</dbReference>
<dbReference type="PIR" id="S66916">
    <property type="entry name" value="S66916"/>
</dbReference>
<dbReference type="RefSeq" id="NP_014685.1">
    <property type="nucleotide sequence ID" value="NM_001183461.1"/>
</dbReference>
<dbReference type="SMR" id="Q08412"/>
<dbReference type="BioGRID" id="34443">
    <property type="interactions" value="95"/>
</dbReference>
<dbReference type="FunCoup" id="Q08412">
    <property type="interactions" value="116"/>
</dbReference>
<dbReference type="IntAct" id="Q08412">
    <property type="interactions" value="12"/>
</dbReference>
<dbReference type="MINT" id="Q08412"/>
<dbReference type="STRING" id="4932.YOR042W"/>
<dbReference type="iPTMnet" id="Q08412"/>
<dbReference type="PaxDb" id="4932-YOR042W"/>
<dbReference type="PeptideAtlas" id="Q08412"/>
<dbReference type="EnsemblFungi" id="YOR042W_mRNA">
    <property type="protein sequence ID" value="YOR042W"/>
    <property type="gene ID" value="YOR042W"/>
</dbReference>
<dbReference type="GeneID" id="854206"/>
<dbReference type="KEGG" id="sce:YOR042W"/>
<dbReference type="AGR" id="SGD:S000005568"/>
<dbReference type="SGD" id="S000005568">
    <property type="gene designation" value="CUE5"/>
</dbReference>
<dbReference type="VEuPathDB" id="FungiDB:YOR042W"/>
<dbReference type="eggNOG" id="KOG0504">
    <property type="taxonomic scope" value="Eukaryota"/>
</dbReference>
<dbReference type="GeneTree" id="ENSGT00390000013104"/>
<dbReference type="HOGENOM" id="CLU_052404_0_0_1"/>
<dbReference type="InParanoid" id="Q08412"/>
<dbReference type="OMA" id="KKWQPLP"/>
<dbReference type="OrthoDB" id="9942608at2759"/>
<dbReference type="BioCyc" id="YEAST:G3O-33586-MONOMER"/>
<dbReference type="Reactome" id="R-SCE-6798695">
    <property type="pathway name" value="Neutrophil degranulation"/>
</dbReference>
<dbReference type="BioGRID-ORCS" id="854206">
    <property type="hits" value="0 hits in 10 CRISPR screens"/>
</dbReference>
<dbReference type="PRO" id="PR:Q08412"/>
<dbReference type="Proteomes" id="UP000002311">
    <property type="component" value="Chromosome XV"/>
</dbReference>
<dbReference type="RNAct" id="Q08412">
    <property type="molecule type" value="protein"/>
</dbReference>
<dbReference type="GO" id="GO:0005737">
    <property type="term" value="C:cytoplasm"/>
    <property type="evidence" value="ECO:0007005"/>
    <property type="project" value="SGD"/>
</dbReference>
<dbReference type="GO" id="GO:0036435">
    <property type="term" value="F:K48-linked polyubiquitin modification-dependent protein binding"/>
    <property type="evidence" value="ECO:0000314"/>
    <property type="project" value="SGD"/>
</dbReference>
<dbReference type="GO" id="GO:0070530">
    <property type="term" value="F:K63-linked polyubiquitin modification-dependent protein binding"/>
    <property type="evidence" value="ECO:0000314"/>
    <property type="project" value="SGD"/>
</dbReference>
<dbReference type="GO" id="GO:0030674">
    <property type="term" value="F:protein-macromolecule adaptor activity"/>
    <property type="evidence" value="ECO:0000315"/>
    <property type="project" value="SGD"/>
</dbReference>
<dbReference type="GO" id="GO:0043130">
    <property type="term" value="F:ubiquitin binding"/>
    <property type="evidence" value="ECO:0000314"/>
    <property type="project" value="SGD"/>
</dbReference>
<dbReference type="GO" id="GO:0031624">
    <property type="term" value="F:ubiquitin conjugating enzyme binding"/>
    <property type="evidence" value="ECO:0000318"/>
    <property type="project" value="GO_Central"/>
</dbReference>
<dbReference type="GO" id="GO:0006914">
    <property type="term" value="P:autophagy"/>
    <property type="evidence" value="ECO:0007669"/>
    <property type="project" value="UniProtKB-KW"/>
</dbReference>
<dbReference type="GO" id="GO:0006995">
    <property type="term" value="P:cellular response to nitrogen starvation"/>
    <property type="evidence" value="ECO:0000315"/>
    <property type="project" value="SGD"/>
</dbReference>
<dbReference type="GO" id="GO:0006511">
    <property type="term" value="P:ubiquitin-dependent protein catabolic process"/>
    <property type="evidence" value="ECO:0000315"/>
    <property type="project" value="SGD"/>
</dbReference>
<dbReference type="CDD" id="cd14372">
    <property type="entry name" value="CUE_Cue5p_like"/>
    <property type="match status" value="1"/>
</dbReference>
<dbReference type="FunFam" id="1.10.8.10:FF:000064">
    <property type="entry name" value="Similar to CUE domain-containing protein"/>
    <property type="match status" value="1"/>
</dbReference>
<dbReference type="Gene3D" id="1.10.8.10">
    <property type="entry name" value="DNA helicase RuvA subunit, C-terminal domain"/>
    <property type="match status" value="1"/>
</dbReference>
<dbReference type="InterPro" id="IPR003892">
    <property type="entry name" value="CUE"/>
</dbReference>
<dbReference type="InterPro" id="IPR041807">
    <property type="entry name" value="Cue5/Don1_CUE"/>
</dbReference>
<dbReference type="InterPro" id="IPR009060">
    <property type="entry name" value="UBA-like_sf"/>
</dbReference>
<dbReference type="PANTHER" id="PTHR16461">
    <property type="entry name" value="TOLL-INTERACTING PROTEIN"/>
    <property type="match status" value="1"/>
</dbReference>
<dbReference type="PANTHER" id="PTHR16461:SF5">
    <property type="entry name" value="TOLL-INTERACTING PROTEIN"/>
    <property type="match status" value="1"/>
</dbReference>
<dbReference type="Pfam" id="PF02845">
    <property type="entry name" value="CUE"/>
    <property type="match status" value="1"/>
</dbReference>
<dbReference type="SMART" id="SM00546">
    <property type="entry name" value="CUE"/>
    <property type="match status" value="1"/>
</dbReference>
<dbReference type="SUPFAM" id="SSF46934">
    <property type="entry name" value="UBA-like"/>
    <property type="match status" value="1"/>
</dbReference>
<dbReference type="PROSITE" id="PS51140">
    <property type="entry name" value="CUE"/>
    <property type="match status" value="1"/>
</dbReference>
<proteinExistence type="evidence at protein level"/>
<keyword id="KW-0072">Autophagy</keyword>
<keyword id="KW-0963">Cytoplasm</keyword>
<keyword id="KW-1017">Isopeptide bond</keyword>
<keyword id="KW-0597">Phosphoprotein</keyword>
<keyword id="KW-1185">Reference proteome</keyword>
<keyword id="KW-0832">Ubl conjugation</keyword>
<evidence type="ECO:0000255" key="1">
    <source>
        <dbReference type="PROSITE-ProRule" id="PRU00468"/>
    </source>
</evidence>
<evidence type="ECO:0000256" key="2">
    <source>
        <dbReference type="SAM" id="MobiDB-lite"/>
    </source>
</evidence>
<evidence type="ECO:0000269" key="3">
    <source>
    </source>
</evidence>
<evidence type="ECO:0000269" key="4">
    <source>
    </source>
</evidence>
<evidence type="ECO:0000269" key="5">
    <source>
    </source>
</evidence>
<evidence type="ECO:0000269" key="6">
    <source>
    </source>
</evidence>
<evidence type="ECO:0000269" key="7">
    <source>
    </source>
</evidence>
<evidence type="ECO:0000269" key="8">
    <source>
    </source>
</evidence>
<evidence type="ECO:0000305" key="9"/>
<evidence type="ECO:0000312" key="10">
    <source>
        <dbReference type="EMBL" id="CAA99232.1"/>
    </source>
</evidence>
<evidence type="ECO:0000312" key="11">
    <source>
        <dbReference type="SGD" id="S000005568"/>
    </source>
</evidence>
<evidence type="ECO:0007744" key="12">
    <source>
    </source>
</evidence>
<evidence type="ECO:0007744" key="13">
    <source>
    </source>
</evidence>
<evidence type="ECO:0007744" key="14">
    <source>
    </source>
</evidence>
<evidence type="ECO:0007744" key="15">
    <source>
    </source>
</evidence>
<evidence type="ECO:0007744" key="16">
    <source>
    </source>
</evidence>
<feature type="chain" id="PRO_0000270974" description="Ubiquitin-binding protein CUE5">
    <location>
        <begin position="1"/>
        <end position="411"/>
    </location>
</feature>
<feature type="domain" description="CUE" evidence="1">
    <location>
        <begin position="97"/>
        <end position="140"/>
    </location>
</feature>
<feature type="region of interest" description="Disordered" evidence="2">
    <location>
        <begin position="1"/>
        <end position="102"/>
    </location>
</feature>
<feature type="region of interest" description="Disordered" evidence="2">
    <location>
        <begin position="142"/>
        <end position="411"/>
    </location>
</feature>
<feature type="short sequence motif" description="AIM">
    <location>
        <begin position="373"/>
        <end position="376"/>
    </location>
</feature>
<feature type="compositionally biased region" description="Basic and acidic residues" evidence="2">
    <location>
        <begin position="1"/>
        <end position="12"/>
    </location>
</feature>
<feature type="compositionally biased region" description="Basic and acidic residues" evidence="2">
    <location>
        <begin position="25"/>
        <end position="58"/>
    </location>
</feature>
<feature type="compositionally biased region" description="Basic and acidic residues" evidence="2">
    <location>
        <begin position="209"/>
        <end position="219"/>
    </location>
</feature>
<feature type="compositionally biased region" description="Basic and acidic residues" evidence="2">
    <location>
        <begin position="230"/>
        <end position="242"/>
    </location>
</feature>
<feature type="compositionally biased region" description="Polar residues" evidence="2">
    <location>
        <begin position="245"/>
        <end position="256"/>
    </location>
</feature>
<feature type="compositionally biased region" description="Acidic residues" evidence="2">
    <location>
        <begin position="399"/>
        <end position="411"/>
    </location>
</feature>
<feature type="modified residue" description="Phosphoserine" evidence="13 14 15">
    <location>
        <position position="21"/>
    </location>
</feature>
<feature type="modified residue" description="Phosphoserine" evidence="14">
    <location>
        <position position="36"/>
    </location>
</feature>
<feature type="modified residue" description="Phosphothreonine" evidence="13 14 15">
    <location>
        <position position="70"/>
    </location>
</feature>
<feature type="modified residue" description="Phosphoserine" evidence="12">
    <location>
        <position position="91"/>
    </location>
</feature>
<feature type="modified residue" description="Phosphothreonine" evidence="13 14 15">
    <location>
        <position position="167"/>
    </location>
</feature>
<feature type="modified residue" description="Phosphoserine" evidence="13 14 15">
    <location>
        <position position="220"/>
    </location>
</feature>
<feature type="modified residue" description="Phosphoserine" evidence="14 15">
    <location>
        <position position="309"/>
    </location>
</feature>
<feature type="modified residue" description="Phosphoserine" evidence="15">
    <location>
        <position position="318"/>
    </location>
</feature>
<feature type="modified residue" description="Phosphothreonine" evidence="15">
    <location>
        <position position="346"/>
    </location>
</feature>
<feature type="modified residue" description="Phosphoserine" evidence="13">
    <location>
        <position position="348"/>
    </location>
</feature>
<feature type="modified residue" description="Phosphothreonine" evidence="15">
    <location>
        <position position="352"/>
    </location>
</feature>
<feature type="modified residue" description="Phosphothreonine" evidence="13 14 15">
    <location>
        <position position="364"/>
    </location>
</feature>
<feature type="modified residue" description="Phosphothreonine" evidence="15">
    <location>
        <position position="367"/>
    </location>
</feature>
<feature type="modified residue" description="Phosphoserine" evidence="13 14 15">
    <location>
        <position position="407"/>
    </location>
</feature>
<feature type="cross-link" description="Glycyl lysine isopeptide (Lys-Gly) (interchain with G-Cter in ubiquitin)" evidence="16">
    <location>
        <position position="15"/>
    </location>
</feature>
<feature type="cross-link" description="Glycyl lysine isopeptide (Lys-Gly) (interchain with G-Cter in ubiquitin)" evidence="16">
    <location>
        <position position="59"/>
    </location>
</feature>
<feature type="cross-link" description="Glycyl lysine isopeptide (Lys-Gly) (interchain with G-Cter in ubiquitin)" evidence="16">
    <location>
        <position position="76"/>
    </location>
</feature>
<feature type="cross-link" description="Glycyl lysine isopeptide (Lys-Gly) (interchain with G-Cter in ubiquitin)" evidence="16">
    <location>
        <position position="156"/>
    </location>
</feature>
<feature type="cross-link" description="Glycyl lysine isopeptide (Lys-Gly) (interchain with G-Cter in ubiquitin)" evidence="16">
    <location>
        <position position="354"/>
    </location>
</feature>
<feature type="cross-link" description="Glycyl lysine isopeptide (Lys-Gly) (interchain with G-Cter in ubiquitin)" evidence="4">
    <location>
        <position position="396"/>
    </location>
</feature>
<feature type="mutagenesis site" description="Impairs interaction with ubiquitin; when associated with A-110." evidence="8">
    <original>F</original>
    <variation>A</variation>
    <location>
        <position position="109"/>
    </location>
</feature>
<feature type="mutagenesis site" description="Impairs interaction with ubiquitin; when associated with A-109." evidence="8">
    <original>P</original>
    <variation>A</variation>
    <location>
        <position position="110"/>
    </location>
</feature>
<feature type="mutagenesis site" description="Impairs interaction with ubiquitin; when associated with A-136." evidence="8">
    <original>L</original>
    <variation>A</variation>
    <location>
        <position position="135"/>
    </location>
</feature>
<feature type="mutagenesis site" description="Impairs interaction with ubiquitin; when associated with A-135." evidence="8">
    <original>L</original>
    <variation>A</variation>
    <location>
        <position position="136"/>
    </location>
</feature>
<feature type="mutagenesis site" description="Impairs interaction with ATG8." evidence="8">
    <original>W</original>
    <variation>A</variation>
    <location>
        <position position="373"/>
    </location>
</feature>
<feature type="mutagenesis site" description="Impairs interaction with ATG8." evidence="8">
    <original>L</original>
    <variation>A</variation>
    <location>
        <position position="376"/>
    </location>
</feature>
<accession>Q08412</accession>
<accession>D6W2A8</accession>
<name>CUE5_YEAST</name>
<protein>
    <recommendedName>
        <fullName>Ubiquitin-binding protein CUE5</fullName>
    </recommendedName>
    <alternativeName>
        <fullName>Coupling of ubiquitin conjugation to ER degradation protein 5</fullName>
    </alternativeName>
</protein>
<organism>
    <name type="scientific">Saccharomyces cerevisiae (strain ATCC 204508 / S288c)</name>
    <name type="common">Baker's yeast</name>
    <dbReference type="NCBI Taxonomy" id="559292"/>
    <lineage>
        <taxon>Eukaryota</taxon>
        <taxon>Fungi</taxon>
        <taxon>Dikarya</taxon>
        <taxon>Ascomycota</taxon>
        <taxon>Saccharomycotina</taxon>
        <taxon>Saccharomycetes</taxon>
        <taxon>Saccharomycetales</taxon>
        <taxon>Saccharomycetaceae</taxon>
        <taxon>Saccharomyces</taxon>
    </lineage>
</organism>
<comment type="function">
    <text evidence="3 8">Connects the ubiquitin pathway to autophagy by functioning as a ubiquitin-ATG8 adapter and thus mediating autophagic clearance of ubiquitin conjugates under starvation conditions. The CUE5-dependent selective autophagy pathway plays an important role in clearance of cytotoxic protein aggregates. Not required for cytoplasmic to vacuole pathway (cvt), mitophagy, pexophagy, or ribophagy.</text>
</comment>
<comment type="subunit">
    <text evidence="7 8">Interacts with ATG8 (via AIM motif), CLB2, and ubiquitin (via CUE domain).</text>
</comment>
<comment type="interaction">
    <interactant intactId="EBI-37580">
        <id>Q08412</id>
    </interactant>
    <interactant intactId="EBI-2684">
        <id>P38182</id>
        <label>ATG8</label>
    </interactant>
    <organismsDiffer>false</organismsDiffer>
    <experiments>4</experiments>
</comment>
<comment type="interaction">
    <interactant intactId="EBI-37580">
        <id>Q08412</id>
    </interactant>
    <interactant intactId="EBI-22980">
        <id>P43603</id>
        <label>LSB3</label>
    </interactant>
    <organismsDiffer>false</organismsDiffer>
    <experiments>8</experiments>
</comment>
<comment type="interaction">
    <interactant intactId="EBI-37580">
        <id>Q08412</id>
    </interactant>
    <interactant intactId="EBI-16219">
        <id>P39940</id>
        <label>RSP5</label>
    </interactant>
    <organismsDiffer>false</organismsDiffer>
    <experiments>3</experiments>
</comment>
<comment type="interaction">
    <interactant intactId="EBI-37580">
        <id>Q08412</id>
    </interactant>
    <interactant intactId="EBI-24460">
        <id>P32793</id>
        <label>YSC84</label>
    </interactant>
    <organismsDiffer>false</organismsDiffer>
    <experiments>7</experiments>
</comment>
<comment type="subcellular location">
    <subcellularLocation>
        <location evidence="5">Cytoplasm</location>
    </subcellularLocation>
    <text>Localizes to cytoplasm in a punctate pattern.</text>
</comment>
<comment type="domain">
    <text evidence="8">The ATG8-interaction motif (AIM) is required for the association with ATG8.</text>
</comment>
<comment type="miscellaneous">
    <text evidence="6">Present with 623 molecules/cell in log phase SD medium.</text>
</comment>